<accession>A5VD74</accession>
<feature type="chain" id="PRO_0000386266" description="GTPase Obg">
    <location>
        <begin position="1"/>
        <end position="345"/>
    </location>
</feature>
<feature type="domain" description="Obg" evidence="2">
    <location>
        <begin position="1"/>
        <end position="159"/>
    </location>
</feature>
<feature type="domain" description="OBG-type G" evidence="1">
    <location>
        <begin position="160"/>
        <end position="327"/>
    </location>
</feature>
<feature type="region of interest" description="Disordered" evidence="3">
    <location>
        <begin position="121"/>
        <end position="142"/>
    </location>
</feature>
<feature type="binding site" evidence="1">
    <location>
        <begin position="166"/>
        <end position="173"/>
    </location>
    <ligand>
        <name>GTP</name>
        <dbReference type="ChEBI" id="CHEBI:37565"/>
    </ligand>
</feature>
<feature type="binding site" evidence="1">
    <location>
        <position position="173"/>
    </location>
    <ligand>
        <name>Mg(2+)</name>
        <dbReference type="ChEBI" id="CHEBI:18420"/>
    </ligand>
</feature>
<feature type="binding site" evidence="1">
    <location>
        <begin position="191"/>
        <end position="195"/>
    </location>
    <ligand>
        <name>GTP</name>
        <dbReference type="ChEBI" id="CHEBI:37565"/>
    </ligand>
</feature>
<feature type="binding site" evidence="1">
    <location>
        <position position="193"/>
    </location>
    <ligand>
        <name>Mg(2+)</name>
        <dbReference type="ChEBI" id="CHEBI:18420"/>
    </ligand>
</feature>
<feature type="binding site" evidence="1">
    <location>
        <begin position="212"/>
        <end position="215"/>
    </location>
    <ligand>
        <name>GTP</name>
        <dbReference type="ChEBI" id="CHEBI:37565"/>
    </ligand>
</feature>
<feature type="binding site" evidence="1">
    <location>
        <begin position="279"/>
        <end position="282"/>
    </location>
    <ligand>
        <name>GTP</name>
        <dbReference type="ChEBI" id="CHEBI:37565"/>
    </ligand>
</feature>
<feature type="binding site" evidence="1">
    <location>
        <begin position="308"/>
        <end position="310"/>
    </location>
    <ligand>
        <name>GTP</name>
        <dbReference type="ChEBI" id="CHEBI:37565"/>
    </ligand>
</feature>
<gene>
    <name evidence="1" type="primary">obg</name>
    <name type="ordered locus">Swit_3895</name>
</gene>
<comment type="function">
    <text evidence="1">An essential GTPase which binds GTP, GDP and possibly (p)ppGpp with moderate affinity, with high nucleotide exchange rates and a fairly low GTP hydrolysis rate. Plays a role in control of the cell cycle, stress response, ribosome biogenesis and in those bacteria that undergo differentiation, in morphogenesis control.</text>
</comment>
<comment type="cofactor">
    <cofactor evidence="1">
        <name>Mg(2+)</name>
        <dbReference type="ChEBI" id="CHEBI:18420"/>
    </cofactor>
</comment>
<comment type="subunit">
    <text evidence="1">Monomer.</text>
</comment>
<comment type="subcellular location">
    <subcellularLocation>
        <location evidence="1">Cytoplasm</location>
    </subcellularLocation>
</comment>
<comment type="similarity">
    <text evidence="1">Belongs to the TRAFAC class OBG-HflX-like GTPase superfamily. OBG GTPase family.</text>
</comment>
<reference key="1">
    <citation type="journal article" date="2010" name="J. Bacteriol.">
        <title>Genome sequence of the dioxin-mineralizing bacterium Sphingomonas wittichii RW1.</title>
        <authorList>
            <person name="Miller T.R."/>
            <person name="Delcher A.L."/>
            <person name="Salzberg S.L."/>
            <person name="Saunders E."/>
            <person name="Detter J.C."/>
            <person name="Halden R.U."/>
        </authorList>
    </citation>
    <scope>NUCLEOTIDE SEQUENCE [LARGE SCALE GENOMIC DNA]</scope>
    <source>
        <strain>DSM 6014 / CCUG 31198 / JCM 15750 / NBRC 105917 / EY 4224 / RW1</strain>
    </source>
</reference>
<name>OBG_RHIWR</name>
<evidence type="ECO:0000255" key="1">
    <source>
        <dbReference type="HAMAP-Rule" id="MF_01454"/>
    </source>
</evidence>
<evidence type="ECO:0000255" key="2">
    <source>
        <dbReference type="PROSITE-ProRule" id="PRU01231"/>
    </source>
</evidence>
<evidence type="ECO:0000256" key="3">
    <source>
        <dbReference type="SAM" id="MobiDB-lite"/>
    </source>
</evidence>
<dbReference type="EC" id="3.6.5.-" evidence="1"/>
<dbReference type="EMBL" id="CP000699">
    <property type="protein sequence ID" value="ABQ70240.1"/>
    <property type="molecule type" value="Genomic_DNA"/>
</dbReference>
<dbReference type="SMR" id="A5VD74"/>
<dbReference type="STRING" id="392499.Swit_3895"/>
<dbReference type="PaxDb" id="392499-Swit_3895"/>
<dbReference type="KEGG" id="swi:Swit_3895"/>
<dbReference type="eggNOG" id="COG0536">
    <property type="taxonomic scope" value="Bacteria"/>
</dbReference>
<dbReference type="HOGENOM" id="CLU_011747_2_0_5"/>
<dbReference type="OrthoDB" id="9807318at2"/>
<dbReference type="Proteomes" id="UP000001989">
    <property type="component" value="Chromosome"/>
</dbReference>
<dbReference type="GO" id="GO:0005737">
    <property type="term" value="C:cytoplasm"/>
    <property type="evidence" value="ECO:0007669"/>
    <property type="project" value="UniProtKB-SubCell"/>
</dbReference>
<dbReference type="GO" id="GO:0005525">
    <property type="term" value="F:GTP binding"/>
    <property type="evidence" value="ECO:0007669"/>
    <property type="project" value="UniProtKB-UniRule"/>
</dbReference>
<dbReference type="GO" id="GO:0003924">
    <property type="term" value="F:GTPase activity"/>
    <property type="evidence" value="ECO:0007669"/>
    <property type="project" value="UniProtKB-UniRule"/>
</dbReference>
<dbReference type="GO" id="GO:0000287">
    <property type="term" value="F:magnesium ion binding"/>
    <property type="evidence" value="ECO:0007669"/>
    <property type="project" value="InterPro"/>
</dbReference>
<dbReference type="GO" id="GO:0042254">
    <property type="term" value="P:ribosome biogenesis"/>
    <property type="evidence" value="ECO:0007669"/>
    <property type="project" value="UniProtKB-UniRule"/>
</dbReference>
<dbReference type="CDD" id="cd01898">
    <property type="entry name" value="Obg"/>
    <property type="match status" value="1"/>
</dbReference>
<dbReference type="FunFam" id="2.70.210.12:FF:000001">
    <property type="entry name" value="GTPase Obg"/>
    <property type="match status" value="1"/>
</dbReference>
<dbReference type="Gene3D" id="2.70.210.12">
    <property type="entry name" value="GTP1/OBG domain"/>
    <property type="match status" value="1"/>
</dbReference>
<dbReference type="Gene3D" id="3.40.50.300">
    <property type="entry name" value="P-loop containing nucleotide triphosphate hydrolases"/>
    <property type="match status" value="1"/>
</dbReference>
<dbReference type="HAMAP" id="MF_01454">
    <property type="entry name" value="GTPase_Obg"/>
    <property type="match status" value="1"/>
</dbReference>
<dbReference type="InterPro" id="IPR031167">
    <property type="entry name" value="G_OBG"/>
</dbReference>
<dbReference type="InterPro" id="IPR006073">
    <property type="entry name" value="GTP-bd"/>
</dbReference>
<dbReference type="InterPro" id="IPR014100">
    <property type="entry name" value="GTP-bd_Obg/CgtA"/>
</dbReference>
<dbReference type="InterPro" id="IPR006074">
    <property type="entry name" value="GTP1-OBG_CS"/>
</dbReference>
<dbReference type="InterPro" id="IPR006169">
    <property type="entry name" value="GTP1_OBG_dom"/>
</dbReference>
<dbReference type="InterPro" id="IPR036726">
    <property type="entry name" value="GTP1_OBG_dom_sf"/>
</dbReference>
<dbReference type="InterPro" id="IPR045086">
    <property type="entry name" value="OBG_GTPase"/>
</dbReference>
<dbReference type="InterPro" id="IPR027417">
    <property type="entry name" value="P-loop_NTPase"/>
</dbReference>
<dbReference type="InterPro" id="IPR005225">
    <property type="entry name" value="Small_GTP-bd"/>
</dbReference>
<dbReference type="NCBIfam" id="TIGR02729">
    <property type="entry name" value="Obg_CgtA"/>
    <property type="match status" value="1"/>
</dbReference>
<dbReference type="NCBIfam" id="NF008955">
    <property type="entry name" value="PRK12297.1"/>
    <property type="match status" value="1"/>
</dbReference>
<dbReference type="NCBIfam" id="NF008956">
    <property type="entry name" value="PRK12299.1"/>
    <property type="match status" value="1"/>
</dbReference>
<dbReference type="NCBIfam" id="TIGR00231">
    <property type="entry name" value="small_GTP"/>
    <property type="match status" value="1"/>
</dbReference>
<dbReference type="PANTHER" id="PTHR11702">
    <property type="entry name" value="DEVELOPMENTALLY REGULATED GTP-BINDING PROTEIN-RELATED"/>
    <property type="match status" value="1"/>
</dbReference>
<dbReference type="PANTHER" id="PTHR11702:SF31">
    <property type="entry name" value="MITOCHONDRIAL RIBOSOME-ASSOCIATED GTPASE 2"/>
    <property type="match status" value="1"/>
</dbReference>
<dbReference type="Pfam" id="PF01018">
    <property type="entry name" value="GTP1_OBG"/>
    <property type="match status" value="1"/>
</dbReference>
<dbReference type="Pfam" id="PF01926">
    <property type="entry name" value="MMR_HSR1"/>
    <property type="match status" value="1"/>
</dbReference>
<dbReference type="PIRSF" id="PIRSF002401">
    <property type="entry name" value="GTP_bd_Obg/CgtA"/>
    <property type="match status" value="1"/>
</dbReference>
<dbReference type="PRINTS" id="PR00326">
    <property type="entry name" value="GTP1OBG"/>
</dbReference>
<dbReference type="SUPFAM" id="SSF82051">
    <property type="entry name" value="Obg GTP-binding protein N-terminal domain"/>
    <property type="match status" value="1"/>
</dbReference>
<dbReference type="SUPFAM" id="SSF52540">
    <property type="entry name" value="P-loop containing nucleoside triphosphate hydrolases"/>
    <property type="match status" value="1"/>
</dbReference>
<dbReference type="PROSITE" id="PS51710">
    <property type="entry name" value="G_OBG"/>
    <property type="match status" value="1"/>
</dbReference>
<dbReference type="PROSITE" id="PS00905">
    <property type="entry name" value="GTP1_OBG"/>
    <property type="match status" value="1"/>
</dbReference>
<dbReference type="PROSITE" id="PS51883">
    <property type="entry name" value="OBG"/>
    <property type="match status" value="1"/>
</dbReference>
<protein>
    <recommendedName>
        <fullName evidence="1">GTPase Obg</fullName>
        <ecNumber evidence="1">3.6.5.-</ecNumber>
    </recommendedName>
    <alternativeName>
        <fullName evidence="1">GTP-binding protein Obg</fullName>
    </alternativeName>
</protein>
<keyword id="KW-0963">Cytoplasm</keyword>
<keyword id="KW-0342">GTP-binding</keyword>
<keyword id="KW-0378">Hydrolase</keyword>
<keyword id="KW-0460">Magnesium</keyword>
<keyword id="KW-0479">Metal-binding</keyword>
<keyword id="KW-0547">Nucleotide-binding</keyword>
<keyword id="KW-1185">Reference proteome</keyword>
<proteinExistence type="inferred from homology"/>
<sequence>MHFLDQAKIFIRSGAGGPGAVSFRREKFIEYGGPDGGHGGKGGDIIFEAVPGLNTLIDFRYTQHFKAQRGHGGAGSNRTGAGGEDLLIKVPVGTQILSEDREQVLADFTVPGQRQVFLRGGDGGRGNASYKTSTNRAPRQHGTGWPAEEMWVWLRLKLLADCGLVGLPNAGKSTFINAVSNAKAKVGAYPFTTIRPQLGVATHKGREFVVADIPGLIEGAAEGAGIGDRFLGHIERCRVLLHLVDASGDDPVGAYEIVRGELDAYGAGLADKPQVLALNKIDAVDAKTLDKLAKKLAKLGGGEVMRLSGASGEGLPAVLDKIIEILGPAPETTAANENDEPWSPI</sequence>
<organism>
    <name type="scientific">Rhizorhabdus wittichii (strain DSM 6014 / CCUG 31198 / JCM 15750 / NBRC 105917 / EY 4224 / RW1)</name>
    <name type="common">Sphingomonas wittichii</name>
    <dbReference type="NCBI Taxonomy" id="392499"/>
    <lineage>
        <taxon>Bacteria</taxon>
        <taxon>Pseudomonadati</taxon>
        <taxon>Pseudomonadota</taxon>
        <taxon>Alphaproteobacteria</taxon>
        <taxon>Sphingomonadales</taxon>
        <taxon>Sphingomonadaceae</taxon>
        <taxon>Rhizorhabdus</taxon>
    </lineage>
</organism>